<name>SYS_GLAP5</name>
<dbReference type="EC" id="6.1.1.11" evidence="1"/>
<dbReference type="EMBL" id="CP001321">
    <property type="protein sequence ID" value="ACL32307.1"/>
    <property type="molecule type" value="Genomic_DNA"/>
</dbReference>
<dbReference type="RefSeq" id="WP_012621856.1">
    <property type="nucleotide sequence ID" value="NC_011852.1"/>
</dbReference>
<dbReference type="SMR" id="B8F4Q5"/>
<dbReference type="STRING" id="557723.HAPS_0659"/>
<dbReference type="GeneID" id="66619027"/>
<dbReference type="KEGG" id="hap:HAPS_0659"/>
<dbReference type="PATRIC" id="fig|557723.8.peg.660"/>
<dbReference type="HOGENOM" id="CLU_023797_1_1_6"/>
<dbReference type="UniPathway" id="UPA00906">
    <property type="reaction ID" value="UER00895"/>
</dbReference>
<dbReference type="Proteomes" id="UP000006743">
    <property type="component" value="Chromosome"/>
</dbReference>
<dbReference type="GO" id="GO:0005737">
    <property type="term" value="C:cytoplasm"/>
    <property type="evidence" value="ECO:0007669"/>
    <property type="project" value="UniProtKB-SubCell"/>
</dbReference>
<dbReference type="GO" id="GO:0005524">
    <property type="term" value="F:ATP binding"/>
    <property type="evidence" value="ECO:0007669"/>
    <property type="project" value="UniProtKB-UniRule"/>
</dbReference>
<dbReference type="GO" id="GO:0004828">
    <property type="term" value="F:serine-tRNA ligase activity"/>
    <property type="evidence" value="ECO:0007669"/>
    <property type="project" value="UniProtKB-UniRule"/>
</dbReference>
<dbReference type="GO" id="GO:0016260">
    <property type="term" value="P:selenocysteine biosynthetic process"/>
    <property type="evidence" value="ECO:0007669"/>
    <property type="project" value="UniProtKB-UniRule"/>
</dbReference>
<dbReference type="GO" id="GO:0006434">
    <property type="term" value="P:seryl-tRNA aminoacylation"/>
    <property type="evidence" value="ECO:0007669"/>
    <property type="project" value="UniProtKB-UniRule"/>
</dbReference>
<dbReference type="CDD" id="cd00770">
    <property type="entry name" value="SerRS_core"/>
    <property type="match status" value="1"/>
</dbReference>
<dbReference type="FunFam" id="3.30.930.10:FF:000018">
    <property type="entry name" value="Serine--tRNA ligase"/>
    <property type="match status" value="1"/>
</dbReference>
<dbReference type="Gene3D" id="3.30.930.10">
    <property type="entry name" value="Bira Bifunctional Protein, Domain 2"/>
    <property type="match status" value="1"/>
</dbReference>
<dbReference type="Gene3D" id="1.10.287.40">
    <property type="entry name" value="Serine-tRNA synthetase, tRNA binding domain"/>
    <property type="match status" value="1"/>
</dbReference>
<dbReference type="HAMAP" id="MF_00176">
    <property type="entry name" value="Ser_tRNA_synth_type1"/>
    <property type="match status" value="1"/>
</dbReference>
<dbReference type="InterPro" id="IPR002314">
    <property type="entry name" value="aa-tRNA-synt_IIb"/>
</dbReference>
<dbReference type="InterPro" id="IPR006195">
    <property type="entry name" value="aa-tRNA-synth_II"/>
</dbReference>
<dbReference type="InterPro" id="IPR045864">
    <property type="entry name" value="aa-tRNA-synth_II/BPL/LPL"/>
</dbReference>
<dbReference type="InterPro" id="IPR002317">
    <property type="entry name" value="Ser-tRNA-ligase_type_1"/>
</dbReference>
<dbReference type="InterPro" id="IPR015866">
    <property type="entry name" value="Ser-tRNA-synth_1_N"/>
</dbReference>
<dbReference type="InterPro" id="IPR042103">
    <property type="entry name" value="SerRS_1_N_sf"/>
</dbReference>
<dbReference type="InterPro" id="IPR033729">
    <property type="entry name" value="SerRS_core"/>
</dbReference>
<dbReference type="InterPro" id="IPR010978">
    <property type="entry name" value="tRNA-bd_arm"/>
</dbReference>
<dbReference type="NCBIfam" id="TIGR00414">
    <property type="entry name" value="serS"/>
    <property type="match status" value="1"/>
</dbReference>
<dbReference type="PANTHER" id="PTHR43697:SF1">
    <property type="entry name" value="SERINE--TRNA LIGASE"/>
    <property type="match status" value="1"/>
</dbReference>
<dbReference type="PANTHER" id="PTHR43697">
    <property type="entry name" value="SERYL-TRNA SYNTHETASE"/>
    <property type="match status" value="1"/>
</dbReference>
<dbReference type="Pfam" id="PF02403">
    <property type="entry name" value="Seryl_tRNA_N"/>
    <property type="match status" value="1"/>
</dbReference>
<dbReference type="Pfam" id="PF00587">
    <property type="entry name" value="tRNA-synt_2b"/>
    <property type="match status" value="1"/>
</dbReference>
<dbReference type="PIRSF" id="PIRSF001529">
    <property type="entry name" value="Ser-tRNA-synth_IIa"/>
    <property type="match status" value="1"/>
</dbReference>
<dbReference type="PRINTS" id="PR00981">
    <property type="entry name" value="TRNASYNTHSER"/>
</dbReference>
<dbReference type="SUPFAM" id="SSF55681">
    <property type="entry name" value="Class II aaRS and biotin synthetases"/>
    <property type="match status" value="1"/>
</dbReference>
<dbReference type="SUPFAM" id="SSF46589">
    <property type="entry name" value="tRNA-binding arm"/>
    <property type="match status" value="1"/>
</dbReference>
<dbReference type="PROSITE" id="PS50862">
    <property type="entry name" value="AA_TRNA_LIGASE_II"/>
    <property type="match status" value="1"/>
</dbReference>
<evidence type="ECO:0000255" key="1">
    <source>
        <dbReference type="HAMAP-Rule" id="MF_00176"/>
    </source>
</evidence>
<gene>
    <name evidence="1" type="primary">serS</name>
    <name type="ordered locus">HAPS_0659</name>
</gene>
<accession>B8F4Q5</accession>
<reference key="1">
    <citation type="journal article" date="2009" name="J. Bacteriol.">
        <title>Complete genome sequence of Haemophilus parasuis SH0165.</title>
        <authorList>
            <person name="Yue M."/>
            <person name="Yang F."/>
            <person name="Yang J."/>
            <person name="Bei W."/>
            <person name="Cai X."/>
            <person name="Chen L."/>
            <person name="Dong J."/>
            <person name="Zhou R."/>
            <person name="Jin M."/>
            <person name="Jin Q."/>
            <person name="Chen H."/>
        </authorList>
    </citation>
    <scope>NUCLEOTIDE SEQUENCE [LARGE SCALE GENOMIC DNA]</scope>
    <source>
        <strain>SH0165</strain>
    </source>
</reference>
<proteinExistence type="inferred from homology"/>
<feature type="chain" id="PRO_1000199486" description="Serine--tRNA ligase">
    <location>
        <begin position="1"/>
        <end position="434"/>
    </location>
</feature>
<feature type="binding site" evidence="1">
    <location>
        <begin position="241"/>
        <end position="243"/>
    </location>
    <ligand>
        <name>L-serine</name>
        <dbReference type="ChEBI" id="CHEBI:33384"/>
    </ligand>
</feature>
<feature type="binding site" evidence="1">
    <location>
        <begin position="272"/>
        <end position="274"/>
    </location>
    <ligand>
        <name>ATP</name>
        <dbReference type="ChEBI" id="CHEBI:30616"/>
    </ligand>
</feature>
<feature type="binding site" evidence="1">
    <location>
        <position position="295"/>
    </location>
    <ligand>
        <name>L-serine</name>
        <dbReference type="ChEBI" id="CHEBI:33384"/>
    </ligand>
</feature>
<feature type="binding site" evidence="1">
    <location>
        <begin position="359"/>
        <end position="362"/>
    </location>
    <ligand>
        <name>ATP</name>
        <dbReference type="ChEBI" id="CHEBI:30616"/>
    </ligand>
</feature>
<feature type="binding site" evidence="1">
    <location>
        <position position="395"/>
    </location>
    <ligand>
        <name>L-serine</name>
        <dbReference type="ChEBI" id="CHEBI:33384"/>
    </ligand>
</feature>
<organism>
    <name type="scientific">Glaesserella parasuis serovar 5 (strain SH0165)</name>
    <name type="common">Haemophilus parasuis</name>
    <dbReference type="NCBI Taxonomy" id="557723"/>
    <lineage>
        <taxon>Bacteria</taxon>
        <taxon>Pseudomonadati</taxon>
        <taxon>Pseudomonadota</taxon>
        <taxon>Gammaproteobacteria</taxon>
        <taxon>Pasteurellales</taxon>
        <taxon>Pasteurellaceae</taxon>
        <taxon>Glaesserella</taxon>
    </lineage>
</organism>
<keyword id="KW-0030">Aminoacyl-tRNA synthetase</keyword>
<keyword id="KW-0067">ATP-binding</keyword>
<keyword id="KW-0963">Cytoplasm</keyword>
<keyword id="KW-0436">Ligase</keyword>
<keyword id="KW-0547">Nucleotide-binding</keyword>
<keyword id="KW-0648">Protein biosynthesis</keyword>
<keyword id="KW-1185">Reference proteome</keyword>
<protein>
    <recommendedName>
        <fullName evidence="1">Serine--tRNA ligase</fullName>
        <ecNumber evidence="1">6.1.1.11</ecNumber>
    </recommendedName>
    <alternativeName>
        <fullName evidence="1">Seryl-tRNA synthetase</fullName>
        <shortName evidence="1">SerRS</shortName>
    </alternativeName>
    <alternativeName>
        <fullName evidence="1">Seryl-tRNA(Ser/Sec) synthetase</fullName>
    </alternativeName>
</protein>
<sequence>MIDQNLLRTNLEEVAQILKLKRNFNLDVARVTSLEEQRKALQVKAENLQAERNARSKNIGAAKARGEDISALLTEVDTMGSELDAAKVELDKVQAEIRELLLNIPNLPADEVPVGKDDSENLEVSRWGTPRQFDFEIKDHVTLGEGLGGLDFPAGVKLTGSRFVVMKSGIARLHRALSQFMLDLHTEQHGYVETYVPYLVNHDTLYGTGQLPKFGEDLFHTQPLDGQDPNAVQKPYALIPTAEVPVTNLVRDEILDEESLPLKLTAHTPCFRSEAGSYGRDTRGLIRMHQFDKVEMVQIVAPEKSMEALEELTGHAEKVLQLLNLPYRKMLLCSGDMSFGSSKTYDLEVWLPAQNTYREISSCSNMWDFQARRMQARCKAKGDKKTRLVHTLNGSGLAVGRTLVAVLENYQNADGSITVPEVLKPYMGGVEVIK</sequence>
<comment type="function">
    <text evidence="1">Catalyzes the attachment of serine to tRNA(Ser). Is also able to aminoacylate tRNA(Sec) with serine, to form the misacylated tRNA L-seryl-tRNA(Sec), which will be further converted into selenocysteinyl-tRNA(Sec).</text>
</comment>
<comment type="catalytic activity">
    <reaction evidence="1">
        <text>tRNA(Ser) + L-serine + ATP = L-seryl-tRNA(Ser) + AMP + diphosphate + H(+)</text>
        <dbReference type="Rhea" id="RHEA:12292"/>
        <dbReference type="Rhea" id="RHEA-COMP:9669"/>
        <dbReference type="Rhea" id="RHEA-COMP:9703"/>
        <dbReference type="ChEBI" id="CHEBI:15378"/>
        <dbReference type="ChEBI" id="CHEBI:30616"/>
        <dbReference type="ChEBI" id="CHEBI:33019"/>
        <dbReference type="ChEBI" id="CHEBI:33384"/>
        <dbReference type="ChEBI" id="CHEBI:78442"/>
        <dbReference type="ChEBI" id="CHEBI:78533"/>
        <dbReference type="ChEBI" id="CHEBI:456215"/>
        <dbReference type="EC" id="6.1.1.11"/>
    </reaction>
</comment>
<comment type="catalytic activity">
    <reaction evidence="1">
        <text>tRNA(Sec) + L-serine + ATP = L-seryl-tRNA(Sec) + AMP + diphosphate + H(+)</text>
        <dbReference type="Rhea" id="RHEA:42580"/>
        <dbReference type="Rhea" id="RHEA-COMP:9742"/>
        <dbReference type="Rhea" id="RHEA-COMP:10128"/>
        <dbReference type="ChEBI" id="CHEBI:15378"/>
        <dbReference type="ChEBI" id="CHEBI:30616"/>
        <dbReference type="ChEBI" id="CHEBI:33019"/>
        <dbReference type="ChEBI" id="CHEBI:33384"/>
        <dbReference type="ChEBI" id="CHEBI:78442"/>
        <dbReference type="ChEBI" id="CHEBI:78533"/>
        <dbReference type="ChEBI" id="CHEBI:456215"/>
        <dbReference type="EC" id="6.1.1.11"/>
    </reaction>
</comment>
<comment type="pathway">
    <text evidence="1">Aminoacyl-tRNA biosynthesis; selenocysteinyl-tRNA(Sec) biosynthesis; L-seryl-tRNA(Sec) from L-serine and tRNA(Sec): step 1/1.</text>
</comment>
<comment type="subunit">
    <text evidence="1">Homodimer. The tRNA molecule binds across the dimer.</text>
</comment>
<comment type="subcellular location">
    <subcellularLocation>
        <location evidence="1">Cytoplasm</location>
    </subcellularLocation>
</comment>
<comment type="domain">
    <text evidence="1">Consists of two distinct domains, a catalytic core and a N-terminal extension that is involved in tRNA binding.</text>
</comment>
<comment type="similarity">
    <text evidence="1">Belongs to the class-II aminoacyl-tRNA synthetase family. Type-1 seryl-tRNA synthetase subfamily.</text>
</comment>